<organism>
    <name type="scientific">Sus scrofa</name>
    <name type="common">Pig</name>
    <dbReference type="NCBI Taxonomy" id="9823"/>
    <lineage>
        <taxon>Eukaryota</taxon>
        <taxon>Metazoa</taxon>
        <taxon>Chordata</taxon>
        <taxon>Craniata</taxon>
        <taxon>Vertebrata</taxon>
        <taxon>Euteleostomi</taxon>
        <taxon>Mammalia</taxon>
        <taxon>Eutheria</taxon>
        <taxon>Laurasiatheria</taxon>
        <taxon>Artiodactyla</taxon>
        <taxon>Suina</taxon>
        <taxon>Suidae</taxon>
        <taxon>Sus</taxon>
    </lineage>
</organism>
<accession>Q95342</accession>
<accession>I3L6F1</accession>
<name>RL18_PIG</name>
<dbReference type="EMBL" id="AEMK02000041">
    <property type="status" value="NOT_ANNOTATED_CDS"/>
    <property type="molecule type" value="Genomic_DNA"/>
</dbReference>
<dbReference type="EMBL" id="Z81178">
    <property type="protein sequence ID" value="CAB03555.1"/>
    <property type="status" value="ALT_INIT"/>
    <property type="molecule type" value="mRNA"/>
</dbReference>
<dbReference type="PDB" id="3J7O">
    <property type="method" value="EM"/>
    <property type="resolution" value="3.50 A"/>
    <property type="chains" value="Q=1-188"/>
</dbReference>
<dbReference type="PDB" id="3J7P">
    <property type="method" value="EM"/>
    <property type="resolution" value="3.50 A"/>
    <property type="chains" value="Q=1-188"/>
</dbReference>
<dbReference type="PDB" id="3J7Q">
    <property type="method" value="EM"/>
    <property type="resolution" value="3.50 A"/>
    <property type="chains" value="Q=1-188"/>
</dbReference>
<dbReference type="PDB" id="3J7R">
    <property type="method" value="EM"/>
    <property type="resolution" value="3.90 A"/>
    <property type="chains" value="Q=1-188"/>
</dbReference>
<dbReference type="PDBsum" id="3J7O"/>
<dbReference type="PDBsum" id="3J7P"/>
<dbReference type="PDBsum" id="3J7Q"/>
<dbReference type="PDBsum" id="3J7R"/>
<dbReference type="SMR" id="Q95342"/>
<dbReference type="FunCoup" id="Q95342">
    <property type="interactions" value="1999"/>
</dbReference>
<dbReference type="STRING" id="9823.ENSSSCP00000019602"/>
<dbReference type="PaxDb" id="9823-ENSSSCP00000019602"/>
<dbReference type="PeptideAtlas" id="Q95342"/>
<dbReference type="Ensembl" id="ENSSSCT00015041758.1">
    <property type="protein sequence ID" value="ENSSSCP00015016486.1"/>
    <property type="gene ID" value="ENSSSCG00015031258.1"/>
</dbReference>
<dbReference type="Ensembl" id="ENSSSCT00030073576.1">
    <property type="protein sequence ID" value="ENSSSCP00030033667.1"/>
    <property type="gene ID" value="ENSSSCG00030052661.1"/>
</dbReference>
<dbReference type="Ensembl" id="ENSSSCT00035064919.1">
    <property type="protein sequence ID" value="ENSSSCP00035026284.1"/>
    <property type="gene ID" value="ENSSSCG00035048718.1"/>
</dbReference>
<dbReference type="Ensembl" id="ENSSSCT00070055905.1">
    <property type="protein sequence ID" value="ENSSSCP00070047494.1"/>
    <property type="gene ID" value="ENSSSCG00070027864.1"/>
</dbReference>
<dbReference type="eggNOG" id="KOG1714">
    <property type="taxonomic scope" value="Eukaryota"/>
</dbReference>
<dbReference type="InParanoid" id="Q95342"/>
<dbReference type="OMA" id="IDICHKN"/>
<dbReference type="TreeFam" id="TF300202"/>
<dbReference type="Reactome" id="R-SSC-156827">
    <property type="pathway name" value="L13a-mediated translational silencing of Ceruloplasmin expression"/>
</dbReference>
<dbReference type="Reactome" id="R-SSC-1799339">
    <property type="pathway name" value="SRP-dependent cotranslational protein targeting to membrane"/>
</dbReference>
<dbReference type="Reactome" id="R-SSC-6791226">
    <property type="pathway name" value="Major pathway of rRNA processing in the nucleolus and cytosol"/>
</dbReference>
<dbReference type="Reactome" id="R-SSC-72689">
    <property type="pathway name" value="Formation of a pool of free 40S subunits"/>
</dbReference>
<dbReference type="Reactome" id="R-SSC-72706">
    <property type="pathway name" value="GTP hydrolysis and joining of the 60S ribosomal subunit"/>
</dbReference>
<dbReference type="Reactome" id="R-SSC-975956">
    <property type="pathway name" value="Nonsense Mediated Decay (NMD) independent of the Exon Junction Complex (EJC)"/>
</dbReference>
<dbReference type="Reactome" id="R-SSC-975957">
    <property type="pathway name" value="Nonsense Mediated Decay (NMD) enhanced by the Exon Junction Complex (EJC)"/>
</dbReference>
<dbReference type="Proteomes" id="UP000008227">
    <property type="component" value="Unplaced"/>
</dbReference>
<dbReference type="Proteomes" id="UP000314985">
    <property type="component" value="Chromosome 6"/>
</dbReference>
<dbReference type="Proteomes" id="UP000694570">
    <property type="component" value="Unplaced"/>
</dbReference>
<dbReference type="Proteomes" id="UP000694571">
    <property type="component" value="Unplaced"/>
</dbReference>
<dbReference type="Proteomes" id="UP000694720">
    <property type="component" value="Unplaced"/>
</dbReference>
<dbReference type="Proteomes" id="UP000694722">
    <property type="component" value="Unplaced"/>
</dbReference>
<dbReference type="Proteomes" id="UP000694723">
    <property type="component" value="Unplaced"/>
</dbReference>
<dbReference type="Proteomes" id="UP000694724">
    <property type="component" value="Unplaced"/>
</dbReference>
<dbReference type="Proteomes" id="UP000694725">
    <property type="component" value="Unplaced"/>
</dbReference>
<dbReference type="Proteomes" id="UP000694726">
    <property type="component" value="Unplaced"/>
</dbReference>
<dbReference type="Proteomes" id="UP000694727">
    <property type="component" value="Unplaced"/>
</dbReference>
<dbReference type="Proteomes" id="UP000694728">
    <property type="component" value="Unplaced"/>
</dbReference>
<dbReference type="Bgee" id="ENSSSCG00000025928">
    <property type="expression patterns" value="Expressed in forelimb bud and 44 other cell types or tissues"/>
</dbReference>
<dbReference type="ExpressionAtlas" id="Q95342">
    <property type="expression patterns" value="baseline and differential"/>
</dbReference>
<dbReference type="GO" id="GO:0022625">
    <property type="term" value="C:cytosolic large ribosomal subunit"/>
    <property type="evidence" value="ECO:0000250"/>
    <property type="project" value="UniProtKB"/>
</dbReference>
<dbReference type="GO" id="GO:0005791">
    <property type="term" value="C:rough endoplasmic reticulum"/>
    <property type="evidence" value="ECO:0007669"/>
    <property type="project" value="UniProtKB-SubCell"/>
</dbReference>
<dbReference type="GO" id="GO:0003723">
    <property type="term" value="F:RNA binding"/>
    <property type="evidence" value="ECO:0000318"/>
    <property type="project" value="GO_Central"/>
</dbReference>
<dbReference type="GO" id="GO:0003735">
    <property type="term" value="F:structural constituent of ribosome"/>
    <property type="evidence" value="ECO:0000318"/>
    <property type="project" value="GO_Central"/>
</dbReference>
<dbReference type="GO" id="GO:0002181">
    <property type="term" value="P:cytoplasmic translation"/>
    <property type="evidence" value="ECO:0000250"/>
    <property type="project" value="UniProtKB"/>
</dbReference>
<dbReference type="FunFam" id="3.100.10.10:FF:000001">
    <property type="entry name" value="60S ribosomal protein L18"/>
    <property type="match status" value="1"/>
</dbReference>
<dbReference type="Gene3D" id="3.100.10.10">
    <property type="match status" value="1"/>
</dbReference>
<dbReference type="InterPro" id="IPR000039">
    <property type="entry name" value="Ribosomal_eL18"/>
</dbReference>
<dbReference type="InterPro" id="IPR021132">
    <property type="entry name" value="Ribosomal_eL18/eL18-A/B/_CS"/>
</dbReference>
<dbReference type="InterPro" id="IPR021131">
    <property type="entry name" value="Ribosomal_uL15/eL18"/>
</dbReference>
<dbReference type="InterPro" id="IPR036227">
    <property type="entry name" value="Ribosomal_uL15/eL18_sf"/>
</dbReference>
<dbReference type="PANTHER" id="PTHR10934">
    <property type="entry name" value="60S RIBOSOMAL PROTEIN L18"/>
    <property type="match status" value="1"/>
</dbReference>
<dbReference type="PANTHER" id="PTHR10934:SF2">
    <property type="entry name" value="LARGE RIBOSOMAL SUBUNIT PROTEIN EL18"/>
    <property type="match status" value="1"/>
</dbReference>
<dbReference type="Pfam" id="PF17135">
    <property type="entry name" value="Ribosomal_L18"/>
    <property type="match status" value="1"/>
</dbReference>
<dbReference type="SUPFAM" id="SSF52080">
    <property type="entry name" value="Ribosomal proteins L15p and L18e"/>
    <property type="match status" value="1"/>
</dbReference>
<dbReference type="PROSITE" id="PS01106">
    <property type="entry name" value="RIBOSOMAL_L18E"/>
    <property type="match status" value="1"/>
</dbReference>
<feature type="chain" id="PRO_0000132771" description="Large ribosomal subunit protein eL18">
    <location>
        <begin position="1"/>
        <end position="195"/>
    </location>
</feature>
<feature type="region of interest" description="Disordered" evidence="2">
    <location>
        <begin position="158"/>
        <end position="195"/>
    </location>
</feature>
<feature type="compositionally biased region" description="Basic residues" evidence="2">
    <location>
        <begin position="168"/>
        <end position="178"/>
    </location>
</feature>
<feature type="compositionally biased region" description="Basic residues" evidence="2">
    <location>
        <begin position="185"/>
        <end position="195"/>
    </location>
</feature>
<feature type="modified residue" description="Phosphoserine" evidence="1">
    <location>
        <position position="137"/>
    </location>
</feature>
<feature type="modified residue" description="Phosphothreonine" evidence="1">
    <location>
        <position position="165"/>
    </location>
</feature>
<feature type="cross-link" description="Glycyl lysine isopeptide (Lys-Gly) (interchain with G-Cter in SUMO2)" evidence="1">
    <location>
        <position position="126"/>
    </location>
</feature>
<feature type="cross-link" description="Glycyl lysine isopeptide (Lys-Gly) (interchain with G-Cter in SUMO2)" evidence="1">
    <location>
        <position position="171"/>
    </location>
</feature>
<feature type="sequence conflict" description="In Ref. 2; CAB03555." ref="2">
    <original>V</original>
    <variation>F</variation>
    <location>
        <position position="99"/>
    </location>
</feature>
<sequence length="195" mass="22304">MVFPSPLQGVDIRHNKDRKVRRKEPKSQDIYLRLLVKLYRFLARRTNSTFNQVVLKRLFMSRTNRPPLSLSRMIRKMKLPGREGKTAVVVGTITDDVRVQEVPKLKVCALRVSSRARSRILKAGGKILTFDQLALDSPKGCGTVLLSGPRKGREVYRHFGKAPGTPHSHTKPYVRSKGRKFERARGRRASRGYKN</sequence>
<gene>
    <name type="primary">RPL18</name>
</gene>
<evidence type="ECO:0000250" key="1">
    <source>
        <dbReference type="UniProtKB" id="Q07020"/>
    </source>
</evidence>
<evidence type="ECO:0000256" key="2">
    <source>
        <dbReference type="SAM" id="MobiDB-lite"/>
    </source>
</evidence>
<evidence type="ECO:0000269" key="3">
    <source>
    </source>
</evidence>
<evidence type="ECO:0000305" key="4"/>
<evidence type="ECO:0007744" key="5">
    <source>
        <dbReference type="PDB" id="3J7O"/>
    </source>
</evidence>
<evidence type="ECO:0007744" key="6">
    <source>
        <dbReference type="PDB" id="3J7P"/>
    </source>
</evidence>
<evidence type="ECO:0007744" key="7">
    <source>
        <dbReference type="PDB" id="3J7Q"/>
    </source>
</evidence>
<protein>
    <recommendedName>
        <fullName evidence="4">Large ribosomal subunit protein eL18</fullName>
    </recommendedName>
    <alternativeName>
        <fullName>60S ribosomal protein L18</fullName>
    </alternativeName>
</protein>
<comment type="function">
    <text evidence="3">Component of the large ribosomal subunit.</text>
</comment>
<comment type="subunit">
    <text evidence="3">Component of the large ribosomal subunit.</text>
</comment>
<comment type="subcellular location">
    <subcellularLocation>
        <location evidence="1">Cytoplasm</location>
        <location evidence="1">Cytosol</location>
    </subcellularLocation>
    <subcellularLocation>
        <location evidence="3">Cytoplasm</location>
    </subcellularLocation>
    <subcellularLocation>
        <location evidence="3">Rough endoplasmic reticulum</location>
    </subcellularLocation>
    <text evidence="1 3">Detected on cytosolic polysomes (By similarity). Detected in ribosomes that are associated with the rough endoplasmic reticulum (PubMed:24930395).</text>
</comment>
<comment type="similarity">
    <text evidence="4">Belongs to the eukaryotic ribosomal protein eL18 family.</text>
</comment>
<comment type="sequence caution" evidence="4">
    <conflict type="erroneous initiation">
        <sequence resource="EMBL-CDS" id="CAB03555"/>
    </conflict>
    <text>Extended N-terminus.</text>
</comment>
<keyword id="KW-0002">3D-structure</keyword>
<keyword id="KW-0963">Cytoplasm</keyword>
<keyword id="KW-0256">Endoplasmic reticulum</keyword>
<keyword id="KW-1017">Isopeptide bond</keyword>
<keyword id="KW-0597">Phosphoprotein</keyword>
<keyword id="KW-1185">Reference proteome</keyword>
<keyword id="KW-0687">Ribonucleoprotein</keyword>
<keyword id="KW-0689">Ribosomal protein</keyword>
<keyword id="KW-0832">Ubl conjugation</keyword>
<reference key="1">
    <citation type="submission" date="2009-11" db="EMBL/GenBank/DDBJ databases">
        <authorList>
            <consortium name="Porcine genome sequencing project"/>
        </authorList>
    </citation>
    <scope>NUCLEOTIDE SEQUENCE [LARGE SCALE GENOMIC DNA]</scope>
    <source>
        <strain>Duroc</strain>
    </source>
</reference>
<reference key="2">
    <citation type="journal article" date="1996" name="Mamm. Genome">
        <title>Evaluation and characterization of a porcine small intestine cDNA library: analysis of 839 clones.</title>
        <authorList>
            <person name="Winteroe A.K."/>
            <person name="Fredholm M."/>
            <person name="Davies W."/>
        </authorList>
    </citation>
    <scope>NUCLEOTIDE SEQUENCE [LARGE SCALE MRNA] OF 9-111</scope>
    <source>
        <tissue>Small intestine</tissue>
    </source>
</reference>
<reference evidence="5 6 7" key="3">
    <citation type="journal article" date="2014" name="Cell">
        <title>Structure of the mammalian ribosome-Sec61 complex to 3.4 A resolution.</title>
        <authorList>
            <person name="Voorhees R.M."/>
            <person name="Fernandez I.S."/>
            <person name="Scheres S.H."/>
            <person name="Hegde R.S."/>
        </authorList>
    </citation>
    <scope>STRUCTURE BY ELECTRON MICROSCOPY (3.40 ANGSTROMS)</scope>
    <scope>FUNCTION</scope>
    <scope>SUBCELLULAR LOCATION</scope>
    <scope>SUBUNIT</scope>
</reference>
<proteinExistence type="evidence at protein level"/>